<keyword id="KW-0436">Ligase</keyword>
<keyword id="KW-0596">Phosphopantetheine</keyword>
<keyword id="KW-0597">Phosphoprotein</keyword>
<keyword id="KW-1185">Reference proteome</keyword>
<keyword id="KW-0808">Transferase</keyword>
<feature type="chain" id="PRO_0000439114" description="D-lysergyl-peptide-synthetase subunit 3">
    <location>
        <begin position="1"/>
        <end position="1792"/>
    </location>
</feature>
<feature type="domain" description="Carrier" evidence="3">
    <location>
        <begin position="779"/>
        <end position="853"/>
    </location>
</feature>
<feature type="region of interest" description="Adenylation (A) domain" evidence="2">
    <location>
        <begin position="239"/>
        <end position="642"/>
    </location>
</feature>
<feature type="region of interest" description="Condensation (C) domain" evidence="2">
    <location>
        <begin position="895"/>
        <end position="1285"/>
    </location>
</feature>
<feature type="region of interest" description="Reductase (R) domain" evidence="2">
    <location>
        <begin position="1415"/>
        <end position="1640"/>
    </location>
</feature>
<feature type="modified residue" description="O-(pantetheine 4'-phosphoryl)serine" evidence="3">
    <location>
        <position position="813"/>
    </location>
</feature>
<reference key="1">
    <citation type="submission" date="2011-06" db="EMBL/GenBank/DDBJ databases">
        <authorList>
            <person name="Florea S."/>
            <person name="Oeser B."/>
            <person name="Tudzynski P."/>
            <person name="Schardl C.L."/>
        </authorList>
    </citation>
    <scope>NUCLEOTIDE SEQUENCE [GENOMIC DNA]</scope>
    <source>
        <strain>20.1</strain>
    </source>
</reference>
<reference key="2">
    <citation type="journal article" date="2013" name="PLoS Genet.">
        <title>Plant-symbiotic fungi as chemical engineers: Multi-genome analysis of the Clavicipitaceae reveals dynamics of alkaloid loci.</title>
        <authorList>
            <person name="Schardl C.L."/>
            <person name="Young C.A."/>
            <person name="Hesse U."/>
            <person name="Amyotte S.G."/>
            <person name="Andreeva K."/>
            <person name="Calie P.J."/>
            <person name="Fleetwood D.J."/>
            <person name="Haws D.C."/>
            <person name="Moore N."/>
            <person name="Oeser B."/>
            <person name="Panaccione D.G."/>
            <person name="Schweri K.K."/>
            <person name="Voisey C.R."/>
            <person name="Farman M.L."/>
            <person name="Jaromczyk J.W."/>
            <person name="Roe B.A."/>
            <person name="O'Sullivan D.M."/>
            <person name="Scott B."/>
            <person name="Tudzynski P."/>
            <person name="An Z."/>
            <person name="Arnaoudova E.G."/>
            <person name="Bullock C.T."/>
            <person name="Charlton N.D."/>
            <person name="Chen L."/>
            <person name="Cox M."/>
            <person name="Dinkins R.D."/>
            <person name="Florea S."/>
            <person name="Glenn A.E."/>
            <person name="Gordon A."/>
            <person name="Gueldener U."/>
            <person name="Harris D.R."/>
            <person name="Hollin W."/>
            <person name="Jaromczyk J."/>
            <person name="Johnson R.D."/>
            <person name="Khan A.K."/>
            <person name="Leistner E."/>
            <person name="Leuchtmann A."/>
            <person name="Li C."/>
            <person name="Liu J."/>
            <person name="Liu J."/>
            <person name="Liu M."/>
            <person name="Mace W."/>
            <person name="Machado C."/>
            <person name="Nagabhyru P."/>
            <person name="Pan J."/>
            <person name="Schmid J."/>
            <person name="Sugawara K."/>
            <person name="Steiner U."/>
            <person name="Takach J.E."/>
            <person name="Tanaka E."/>
            <person name="Webb J.S."/>
            <person name="Wilson E.V."/>
            <person name="Wiseman J.L."/>
            <person name="Yoshida R."/>
            <person name="Zeng Z."/>
        </authorList>
    </citation>
    <scope>NUCLEOTIDE SEQUENCE [LARGE SCALE GENOMIC DNA]</scope>
    <source>
        <strain>20.1</strain>
    </source>
</reference>
<reference key="3">
    <citation type="journal article" date="2001" name="Appl. Microbiol. Biotechnol.">
        <title>Biotechnology and genetics of ergot alkaloids.</title>
        <authorList>
            <person name="Tudzynski P."/>
            <person name="Correia T."/>
            <person name="Keller U."/>
        </authorList>
    </citation>
    <scope>BIOTECHNOLOGY</scope>
    <source>
        <strain>P1 / 1029/N5</strain>
    </source>
</reference>
<reference key="4">
    <citation type="journal article" date="2003" name="Chem. Biol.">
        <title>Molecular cloning and analysis of the ergopeptine assembly system in the ergot fungus Claviceps purpurea.</title>
        <authorList>
            <person name="Correia T."/>
            <person name="Grammel N."/>
            <person name="Ortel I."/>
            <person name="Keller U."/>
            <person name="Tudzynski P."/>
        </authorList>
    </citation>
    <scope>FUNCTION</scope>
</reference>
<reference key="5">
    <citation type="journal article" date="2004" name="Fungal Genet. Biol.">
        <title>The determinant step in ergot alkaloid biosynthesis by an endophyte of perennial ryegrass.</title>
        <authorList>
            <person name="Wang J."/>
            <person name="Machado C."/>
            <person name="Panaccione D.G."/>
            <person name="Tsai H.-F."/>
            <person name="Schardl C.L."/>
        </authorList>
    </citation>
    <scope>FUNCTION</scope>
    <source>
        <strain>ATCC 20102 / Farmitalia FI 32/17</strain>
    </source>
</reference>
<reference key="6">
    <citation type="journal article" date="2005" name="Phytochemistry">
        <title>The ergot alkaloid gene cluster in Claviceps purpurea: extension of the cluster sequence and intra species evolution.</title>
        <authorList>
            <person name="Haarmann T."/>
            <person name="Machado C."/>
            <person name="Lubbe Y."/>
            <person name="Correia T."/>
            <person name="Schardl C.L."/>
            <person name="Panaccione D.G."/>
            <person name="Tudzynski P."/>
        </authorList>
    </citation>
    <scope>IDENTIFICATION IN THE EAS CLUSTER</scope>
    <scope>FUNCTION</scope>
    <scope>DOMAIN</scope>
</reference>
<reference key="7">
    <citation type="journal article" date="2006" name="ChemBioChem">
        <title>Identification of the cytochrome P450 monooxygenase that bridges the clavine and ergoline alkaloid pathways.</title>
        <authorList>
            <person name="Haarmann T."/>
            <person name="Ortel I."/>
            <person name="Tudzynski P."/>
            <person name="Keller U."/>
        </authorList>
    </citation>
    <scope>FUNCTION</scope>
    <source>
        <strain>P1 / 1029/N5</strain>
    </source>
</reference>
<reference key="8">
    <citation type="journal article" date="2007" name="Appl. Environ. Microbiol.">
        <title>A complex ergovaline gene cluster in epichloe endophytes of grasses.</title>
        <authorList>
            <person name="Fleetwood D.J."/>
            <person name="Scott B."/>
            <person name="Lane G.A."/>
            <person name="Tanaka A."/>
            <person name="Johnson R.D."/>
        </authorList>
    </citation>
    <scope>FUNCTION</scope>
</reference>
<reference key="9">
    <citation type="journal article" date="2007" name="Appl. Environ. Microbiol.">
        <title>Comparison of ergot alkaloid biosynthesis gene clusters in Claviceps species indicates loss of late pathway steps in evolution of C. fusiformis.</title>
        <authorList>
            <person name="Lorenz N."/>
            <person name="Wilson E.V."/>
            <person name="Machado C."/>
            <person name="Schardl C.L."/>
            <person name="Tudzynski P."/>
        </authorList>
    </citation>
    <scope>FUNCTION</scope>
</reference>
<reference key="10">
    <citation type="journal article" date="2008" name="Fungal Genet. Biol.">
        <title>Use of a nonhomologous end joining deficient strain (Deltaku70) of the ergot fungus Claviceps purpurea for identification of a nonribosomal peptide synthetase gene involved in ergotamine biosynthesis.</title>
        <authorList>
            <person name="Haarmann T."/>
            <person name="Lorenz N."/>
            <person name="Tudzynski P."/>
        </authorList>
    </citation>
    <scope>FUNCTION</scope>
</reference>
<reference key="11">
    <citation type="journal article" date="2009" name="J. Biol. Chem.">
        <title>Combinatorial assembly of simple and complex D-lysergic acid alkaloid peptide classes in the ergot fungus Claviceps purpurea.</title>
        <authorList>
            <person name="Ortel I."/>
            <person name="Keller U."/>
        </authorList>
    </citation>
    <scope>FUNCTION</scope>
    <scope>DOMAIN</scope>
    <scope>CATALYTIC ACTIVITY</scope>
    <scope>PATHWAY</scope>
</reference>
<reference key="12">
    <citation type="journal article" date="2010" name="Appl. Environ. Microbiol.">
        <title>Alkaloid cluster gene ccsA of the ergot fungus Claviceps purpurea encodes chanoclavine I synthase, a flavin adenine dinucleotide-containing oxidoreductase mediating the transformation of N-methyl-dimethylallyltryptophan to chanoclavine I.</title>
        <authorList>
            <person name="Lorenz N."/>
            <person name="Olsovska J."/>
            <person name="Sulc M."/>
            <person name="Tudzynski P."/>
        </authorList>
    </citation>
    <scope>FUNCTION</scope>
</reference>
<reference key="13">
    <citation type="journal article" date="2010" name="J. Am. Chem. Soc.">
        <title>Controlling a structural branch point in ergot alkaloid biosynthesis.</title>
        <authorList>
            <person name="Cheng J.Z."/>
            <person name="Coyle C.M."/>
            <person name="Panaccione D.G."/>
            <person name="O'Connor S.E."/>
        </authorList>
    </citation>
    <scope>FUNCTION</scope>
    <source>
        <strain>ATCC 20102 / Farmitalia FI 32/17</strain>
    </source>
</reference>
<reference key="14">
    <citation type="journal article" date="2011" name="Curr. Genet.">
        <title>Ergot cluster-encoded catalase is required for synthesis of chanoclavine-I in Aspergillus fumigatus.</title>
        <authorList>
            <person name="Goetz K.E."/>
            <person name="Coyle C.M."/>
            <person name="Cheng J.Z."/>
            <person name="O'Connor S.E."/>
            <person name="Panaccione D.G."/>
        </authorList>
    </citation>
    <scope>FUNCTION</scope>
</reference>
<reference key="15">
    <citation type="journal article" date="2011" name="Org. Biomol. Chem.">
        <title>New insights into ergot alkaloid biosynthesis in Claviceps purpurea: an agroclavine synthase EasG catalyses, via a non-enzymatic adduct with reduced glutathione, the conversion of chanoclavine-I aldehyde to agroclavine.</title>
        <authorList>
            <person name="Matuschek M."/>
            <person name="Wallwey C."/>
            <person name="Xie X."/>
            <person name="Li S.M."/>
        </authorList>
    </citation>
    <scope>FUNCTION</scope>
</reference>
<reference key="16">
    <citation type="journal article" date="2014" name="Chem. Biol.">
        <title>Cyclolization of D-lysergic acid alkaloid peptides.</title>
        <authorList>
            <person name="Havemann J."/>
            <person name="Vogel D."/>
            <person name="Loll B."/>
            <person name="Keller U."/>
        </authorList>
    </citation>
    <scope>FUNCTION</scope>
</reference>
<protein>
    <recommendedName>
        <fullName evidence="18">D-lysergyl-peptide-synthetase subunit 3</fullName>
        <shortName evidence="17">LPS3</shortName>
        <ecNumber evidence="9">2.3.1.-</ecNumber>
    </recommendedName>
    <alternativeName>
        <fullName evidence="16">Ergot alkaloid synthesis protein lpsC</fullName>
    </alternativeName>
    <alternativeName>
        <fullName evidence="15">Nonribosomal peptide synthetase 3</fullName>
    </alternativeName>
</protein>
<proteinExistence type="evidence at protein level"/>
<evidence type="ECO:0000250" key="1">
    <source>
        <dbReference type="UniProtKB" id="Q50EL0"/>
    </source>
</evidence>
<evidence type="ECO:0000255" key="2"/>
<evidence type="ECO:0000255" key="3">
    <source>
        <dbReference type="PROSITE-ProRule" id="PRU00258"/>
    </source>
</evidence>
<evidence type="ECO:0000269" key="4">
    <source>
    </source>
</evidence>
<evidence type="ECO:0000269" key="5">
    <source>
    </source>
</evidence>
<evidence type="ECO:0000269" key="6">
    <source>
    </source>
</evidence>
<evidence type="ECO:0000269" key="7">
    <source>
    </source>
</evidence>
<evidence type="ECO:0000269" key="8">
    <source>
    </source>
</evidence>
<evidence type="ECO:0000269" key="9">
    <source>
    </source>
</evidence>
<evidence type="ECO:0000269" key="10">
    <source>
    </source>
</evidence>
<evidence type="ECO:0000269" key="11">
    <source>
    </source>
</evidence>
<evidence type="ECO:0000269" key="12">
    <source>
    </source>
</evidence>
<evidence type="ECO:0000269" key="13">
    <source>
    </source>
</evidence>
<evidence type="ECO:0000269" key="14">
    <source>
    </source>
</evidence>
<evidence type="ECO:0000303" key="15">
    <source>
    </source>
</evidence>
<evidence type="ECO:0000303" key="16">
    <source>
    </source>
</evidence>
<evidence type="ECO:0000305" key="17"/>
<evidence type="ECO:0000305" key="18">
    <source>
    </source>
</evidence>
<evidence type="ECO:0000305" key="19">
    <source>
    </source>
</evidence>
<evidence type="ECO:0000305" key="20">
    <source>
    </source>
</evidence>
<name>LPSC_CLAP2</name>
<dbReference type="EC" id="2.3.1.-" evidence="9"/>
<dbReference type="EMBL" id="JN186799">
    <property type="protein sequence ID" value="AET79177.1"/>
    <property type="molecule type" value="Genomic_DNA"/>
</dbReference>
<dbReference type="EMBL" id="CAGA01000020">
    <property type="protein sequence ID" value="CCE30237.1"/>
    <property type="molecule type" value="Genomic_DNA"/>
</dbReference>
<dbReference type="SMR" id="M1VVW6"/>
<dbReference type="STRING" id="1111077.M1VVW6"/>
<dbReference type="VEuPathDB" id="FungiDB:CPUR_04085"/>
<dbReference type="eggNOG" id="KOG1178">
    <property type="taxonomic scope" value="Eukaryota"/>
</dbReference>
<dbReference type="HOGENOM" id="CLU_000022_60_3_1"/>
<dbReference type="OrthoDB" id="416786at2759"/>
<dbReference type="UniPathway" id="UPA00327"/>
<dbReference type="Proteomes" id="UP000016801">
    <property type="component" value="Unassembled WGS sequence"/>
</dbReference>
<dbReference type="GO" id="GO:0005737">
    <property type="term" value="C:cytoplasm"/>
    <property type="evidence" value="ECO:0007669"/>
    <property type="project" value="TreeGrafter"/>
</dbReference>
<dbReference type="GO" id="GO:0016874">
    <property type="term" value="F:ligase activity"/>
    <property type="evidence" value="ECO:0007669"/>
    <property type="project" value="UniProtKB-KW"/>
</dbReference>
<dbReference type="GO" id="GO:0031177">
    <property type="term" value="F:phosphopantetheine binding"/>
    <property type="evidence" value="ECO:0007669"/>
    <property type="project" value="TreeGrafter"/>
</dbReference>
<dbReference type="GO" id="GO:0016740">
    <property type="term" value="F:transferase activity"/>
    <property type="evidence" value="ECO:0007669"/>
    <property type="project" value="UniProtKB-KW"/>
</dbReference>
<dbReference type="GO" id="GO:0043041">
    <property type="term" value="P:amino acid activation for nonribosomal peptide biosynthetic process"/>
    <property type="evidence" value="ECO:0007669"/>
    <property type="project" value="TreeGrafter"/>
</dbReference>
<dbReference type="GO" id="GO:0035835">
    <property type="term" value="P:indole alkaloid biosynthetic process"/>
    <property type="evidence" value="ECO:0007669"/>
    <property type="project" value="UniProtKB-UniPathway"/>
</dbReference>
<dbReference type="CDD" id="cd05918">
    <property type="entry name" value="A_NRPS_SidN3_like"/>
    <property type="match status" value="1"/>
</dbReference>
<dbReference type="Gene3D" id="3.30.300.30">
    <property type="match status" value="1"/>
</dbReference>
<dbReference type="Gene3D" id="1.10.1200.10">
    <property type="entry name" value="ACP-like"/>
    <property type="match status" value="1"/>
</dbReference>
<dbReference type="Gene3D" id="3.30.559.10">
    <property type="entry name" value="Chloramphenicol acetyltransferase-like domain"/>
    <property type="match status" value="1"/>
</dbReference>
<dbReference type="Gene3D" id="3.40.50.12780">
    <property type="entry name" value="N-terminal domain of ligase-like"/>
    <property type="match status" value="1"/>
</dbReference>
<dbReference type="Gene3D" id="3.40.50.720">
    <property type="entry name" value="NAD(P)-binding Rossmann-like Domain"/>
    <property type="match status" value="1"/>
</dbReference>
<dbReference type="Gene3D" id="3.30.559.30">
    <property type="entry name" value="Nonribosomal peptide synthetase, condensation domain"/>
    <property type="match status" value="2"/>
</dbReference>
<dbReference type="InterPro" id="IPR036736">
    <property type="entry name" value="ACP-like_sf"/>
</dbReference>
<dbReference type="InterPro" id="IPR045851">
    <property type="entry name" value="AMP-bd_C_sf"/>
</dbReference>
<dbReference type="InterPro" id="IPR000873">
    <property type="entry name" value="AMP-dep_synth/lig_dom"/>
</dbReference>
<dbReference type="InterPro" id="IPR042099">
    <property type="entry name" value="ANL_N_sf"/>
</dbReference>
<dbReference type="InterPro" id="IPR023213">
    <property type="entry name" value="CAT-like_dom_sf"/>
</dbReference>
<dbReference type="InterPro" id="IPR001242">
    <property type="entry name" value="Condensatn"/>
</dbReference>
<dbReference type="InterPro" id="IPR013120">
    <property type="entry name" value="Far_NAD-bd"/>
</dbReference>
<dbReference type="InterPro" id="IPR036291">
    <property type="entry name" value="NAD(P)-bd_dom_sf"/>
</dbReference>
<dbReference type="InterPro" id="IPR009081">
    <property type="entry name" value="PP-bd_ACP"/>
</dbReference>
<dbReference type="InterPro" id="IPR006162">
    <property type="entry name" value="Ppantetheine_attach_site"/>
</dbReference>
<dbReference type="InterPro" id="IPR010080">
    <property type="entry name" value="Thioester_reductase-like_dom"/>
</dbReference>
<dbReference type="NCBIfam" id="TIGR01746">
    <property type="entry name" value="Thioester-redct"/>
    <property type="match status" value="1"/>
</dbReference>
<dbReference type="PANTHER" id="PTHR45527:SF16">
    <property type="entry name" value="NONRIBOSOMAL PEPTIDE SYNTHASE ATNA-RELATED"/>
    <property type="match status" value="1"/>
</dbReference>
<dbReference type="PANTHER" id="PTHR45527">
    <property type="entry name" value="NONRIBOSOMAL PEPTIDE SYNTHETASE"/>
    <property type="match status" value="1"/>
</dbReference>
<dbReference type="Pfam" id="PF00501">
    <property type="entry name" value="AMP-binding"/>
    <property type="match status" value="1"/>
</dbReference>
<dbReference type="Pfam" id="PF00668">
    <property type="entry name" value="Condensation"/>
    <property type="match status" value="1"/>
</dbReference>
<dbReference type="Pfam" id="PF07993">
    <property type="entry name" value="NAD_binding_4"/>
    <property type="match status" value="1"/>
</dbReference>
<dbReference type="Pfam" id="PF00550">
    <property type="entry name" value="PP-binding"/>
    <property type="match status" value="1"/>
</dbReference>
<dbReference type="SUPFAM" id="SSF56801">
    <property type="entry name" value="Acetyl-CoA synthetase-like"/>
    <property type="match status" value="1"/>
</dbReference>
<dbReference type="SUPFAM" id="SSF47336">
    <property type="entry name" value="ACP-like"/>
    <property type="match status" value="1"/>
</dbReference>
<dbReference type="SUPFAM" id="SSF52777">
    <property type="entry name" value="CoA-dependent acyltransferases"/>
    <property type="match status" value="3"/>
</dbReference>
<dbReference type="SUPFAM" id="SSF51735">
    <property type="entry name" value="NAD(P)-binding Rossmann-fold domains"/>
    <property type="match status" value="1"/>
</dbReference>
<dbReference type="PROSITE" id="PS50075">
    <property type="entry name" value="CARRIER"/>
    <property type="match status" value="1"/>
</dbReference>
<dbReference type="PROSITE" id="PS00012">
    <property type="entry name" value="PHOSPHOPANTETHEINE"/>
    <property type="match status" value="1"/>
</dbReference>
<sequence>MNSIKLKFNCKDSLWQEHIGAGDFSFAAIFLTTWGIVLRAYLDTDDVFFEYGLSRCEPVSQRDGIDELVPDRPFNLKFDGSMTVKDTIRRADSVVYGTPLVQDGLEHETHRETDPKRETFYSTCMLFLDGPKSPIDADVVEGTILDDIEFEMKPVVNYDMVVYVLSGKVCYLSYNVTRVSDDQAAHVAATFETVAKCIADVPHRLVQEVESLSQLDVDRLKTWNAYQPIAVETCYQDLFRQRCDLHPNSPAVIAWDGSFTYDELDHFSSLLATRLQAAGIGPDVFVTICATRCRWIPVAMLGIIKARGAFCALDLSHPLDRLKDICDALKSTITITTPTDSNIARKLASTVIVIGGDAPVESDRITPMNDRPKPINGHPTNALYSVFTSGSSGKPKGVVVEHRSFVSSALASIQPLDIRPHDRVLHFSAYAFDISVFEVLTPLISGATIAIPSEKRRKESLTHAVQELGATWALLTPTVARLYDPDEFPSLRTLALGGELAQASDIALWQSKNVVVIYNPAECCPIGVSGPACPADGKFLGWSHTCQRAWIVDPRDHDKLPPIGAVGELLIEGPVVARCYAHDPNFSSPDSPFIQSTPSWMLRLRSNTPSGTRLYRTGDLARYGSDASLYYMGRKDSQIKIRGQRTEPGEIESNLHSILSKDKLGVAIVVLELRGSSKIIAFVSKDTGGLGGDSNTVGQLRIEAATEETDVCITKATSKLHSIMPAYMVPSAFLSVNYIPISRSGKIDRTRLKSFALSLPQETLLRVNNGLETGDLPESNEEHRLQRMYSLVLGISRDKVGMESDFFRLGGDSLQAMKLLALAPKEGLTDISYEDIFRYPRLKDLARKASQSVTIKKDGFGENSSVIHPFSLVIDGQSLIDMAAKQCDIERDSIEDIYPCTPMQASIISLAVKGKIMPFLTFGLALRDHVDTKRVKDTWHAAYRANSLLRTRIIVCAETGQLYQVVVGGDIFWDDDECGNFAQPKSGPSASIGGPLVRMKLVEGQLSIAIHRALYDNWSIRQLLNDISGAYNGLTLPSRPSFNCYVSYAARSLEAASSFCNAELGDSDLDAAKYPEPVSQNSHTNFRAWLGIRVFTCQKESIDVLASEFQLAWAMIAYARTNKKDVVFGVLSSGRSNASKDTKEIMGPIATVTPLRVTIDGTQDVGGALEELQYRQEEQAMYTHLGLRRIGQLGRNAAAACQIQTVLIVEPDLPDLRGVWFSNDATLPNHSDADASNYRLTIKCVVGPDCTDIFAIFDHQSLPIMEVKEILSQFEHILGQIHGKEASQLSVASIDTVNFKDWDTLHKLTEMPSVCRNGLLLSDPTILPQGQMKTFSAVEEAAAHCAFQDSLQEASIARDAKMQPKEPLSSADLISEINRYDLAIMRSRPSPESILLSELALTGDSHSSGTHTVFVTGANGFIGTQILRHCLEDPTIDRVIALVRGSSANEARSRTEESARRAQWWSDCHSQKLEVWPGDLAMPHLGLNETHWRRLADRTTINAIIHNGASVHWLKRYADLEATNVGATAQLLQLAVANPRLGFVYVSSGRYTDPNAESEEPAAANVAATAMPYSQTKFVAESLIRRTAARLPHGQTQVRIISLGLVIGDPLTGVVNADDYLWRLIATCVQAGEFNSSAGSEWMPISDVTSTALAIVQTALNPAGVPATIKPITGGLMWSEIWDLVTDMGYDMEPRPESEWMATVRRDLEREQERHPLWTLSHLVESRSQLNTDAGAGPAWADAWRGDEATTRNLKTAFRRSLRFLGEVGFLPGQKGQNTDGEVNGRAFTRAW</sequence>
<accession>M1VVW6</accession>
<accession>G8GV59</accession>
<comment type="function">
    <text evidence="1 4 5 6 7 8 9 10 11 12 13 14 19 20">D-lysergyl-peptide-synthetase subunit 3; part of the gene cluster that mediates the biosynthesis of fungal ergot alkaloid (PubMed:14700635, PubMed:14732265, PubMed:15904941, PubMed:17308187, PubMed:17720822). DmaW catalyzes the first step of ergot alkaloid biosynthesis by condensing dimethylallyl diphosphate (DMAP) and tryptophan to form 4-dimethylallyl-L-tryptophan (PubMed:14732265). The second step is catalyzed by the methyltransferase easF that methylates 4-dimethylallyl-L-tryptophan in the presence of S-adenosyl-L-methionine, resulting in the formation of 4-dimethylallyl-L-abrine (By similarity). The catalase easC and the FAD-dependent oxidoreductase easE then transform 4-dimethylallyl-L-abrine to chanoclavine-I which is further oxidized by easD in the presence of NAD(+), resulting in the formation of chanoclavine-I aldehyde (PubMed:20118373, PubMed:21409592). Agroclavine dehydrogenase easG then mediates the conversion of chanoclavine-I aldehyde to agroclavine via a non-enzymatic adduct reaction: the substrate is an iminium intermediate that is formed spontaneously from chanoclavine-I aldehyde in the presence of glutathione (PubMed:20735127, PubMed:21494745). The presence of easA is not required to complete this reaction (PubMed:21494745). Further conversion of agroclavine to paspalic acid is a two-step process involving oxidation of agroclavine to elymoclavine and of elymoclavine to paspalic acid, the second step being performed by the elymoclavine oxidase cloA (PubMed:16538694, PubMed:17720822). Paspalic acid is then further converted to D-lysergic acid (PubMed:15904941). Ergopeptines are assembled from D-lysergic acid and three different amino acids by the D-lysergyl-peptide-synthetases composed each of a monomudular and a trimodular nonribosomal peptide synthetase subunit (PubMed:14700635, PubMed:15904941). LpsB and lpsC encode the monomodular subunits responsible for D-lysergic acid activation and incorporation into the ergopeptine backbone (PubMed:14700635). LpsA1 and A2 subunits encode the trimodular nonribosomal peptide synthetase assembling the tripeptide portion of ergopeptines (PubMed:14700635). LpsA1 is responsible for formation of the major ergopeptine, ergotamine, and lpsA2 for alpha-ergocryptine, the minor ergopeptine of the total alkaloid mixture elaborated by C.purpurea (PubMed:17560817, PubMed:19139103). D-lysergyl-tripeptides are assembled by the nonribosomal peptide synthetases and released as N-(D-lysergyl-aminoacyl)-lactams (PubMed:24361048). Cyclolization of the D-lysergyl-tripeptides is performed by the Fe(2+)/2-ketoglutarate-dependent dioxygenase easH which introduces a hydroxyl group into N-(D-lysergyl-aminoacyl)-lactam at alpha-C of the aminoacyl residue followed by spontaneous condensation with the terminal lactam carbonyl group (PubMed:24361048).</text>
</comment>
<comment type="pathway">
    <text evidence="9">Alkaloid biosynthesis; ergot alkaloid biosynthesis.</text>
</comment>
<comment type="domain">
    <text evidence="4">NRP synthetases are composed of discrete domains (adenylation (A), thiolation (T) or peptidyl carrier protein (PCP) and condensation (C) domains) which when grouped together are referred to as a single module (PubMed:14700635). Each module is responsible for the recognition (via the A domain) and incorporation of a single amino acid into the growing peptide product (PubMed:14700635). Thus, an NRP synthetase is generally composed of one or more modules and can terminate in a thioesterase domain (TE) or reductase domain (R) that releases the newly synthesized peptide from the enzyme (PubMed:14700635). LpsC is composed of only one module which is required for the activation of D-lysergic acid activation and its incorporation in the final ergot alkaloid (PubMed:19139103).</text>
</comment>
<comment type="similarity">
    <text evidence="17">Belongs to the NRP synthetase family.</text>
</comment>
<gene>
    <name evidence="16" type="primary">lpsC</name>
    <name evidence="15" type="synonym">cpps3</name>
    <name type="ORF">CPUR_04085</name>
</gene>
<organism>
    <name type="scientific">Claviceps purpurea (strain 20.1)</name>
    <name type="common">Ergot fungus</name>
    <name type="synonym">Sphacelia segetum</name>
    <dbReference type="NCBI Taxonomy" id="1111077"/>
    <lineage>
        <taxon>Eukaryota</taxon>
        <taxon>Fungi</taxon>
        <taxon>Dikarya</taxon>
        <taxon>Ascomycota</taxon>
        <taxon>Pezizomycotina</taxon>
        <taxon>Sordariomycetes</taxon>
        <taxon>Hypocreomycetidae</taxon>
        <taxon>Hypocreales</taxon>
        <taxon>Clavicipitaceae</taxon>
        <taxon>Claviceps</taxon>
    </lineage>
</organism>